<reference key="1">
    <citation type="journal article" date="1998" name="Nature">
        <title>Deciphering the biology of Mycobacterium tuberculosis from the complete genome sequence.</title>
        <authorList>
            <person name="Cole S.T."/>
            <person name="Brosch R."/>
            <person name="Parkhill J."/>
            <person name="Garnier T."/>
            <person name="Churcher C.M."/>
            <person name="Harris D.E."/>
            <person name="Gordon S.V."/>
            <person name="Eiglmeier K."/>
            <person name="Gas S."/>
            <person name="Barry C.E. III"/>
            <person name="Tekaia F."/>
            <person name="Badcock K."/>
            <person name="Basham D."/>
            <person name="Brown D."/>
            <person name="Chillingworth T."/>
            <person name="Connor R."/>
            <person name="Davies R.M."/>
            <person name="Devlin K."/>
            <person name="Feltwell T."/>
            <person name="Gentles S."/>
            <person name="Hamlin N."/>
            <person name="Holroyd S."/>
            <person name="Hornsby T."/>
            <person name="Jagels K."/>
            <person name="Krogh A."/>
            <person name="McLean J."/>
            <person name="Moule S."/>
            <person name="Murphy L.D."/>
            <person name="Oliver S."/>
            <person name="Osborne J."/>
            <person name="Quail M.A."/>
            <person name="Rajandream M.A."/>
            <person name="Rogers J."/>
            <person name="Rutter S."/>
            <person name="Seeger K."/>
            <person name="Skelton S."/>
            <person name="Squares S."/>
            <person name="Squares R."/>
            <person name="Sulston J.E."/>
            <person name="Taylor K."/>
            <person name="Whitehead S."/>
            <person name="Barrell B.G."/>
        </authorList>
    </citation>
    <scope>NUCLEOTIDE SEQUENCE [LARGE SCALE GENOMIC DNA]</scope>
    <source>
        <strain>ATCC 25618 / H37Rv</strain>
    </source>
</reference>
<reference key="2">
    <citation type="journal article" date="2011" name="Mol. Cell. Proteomics">
        <title>Proteogenomic analysis of Mycobacterium tuberculosis by high resolution mass spectrometry.</title>
        <authorList>
            <person name="Kelkar D.S."/>
            <person name="Kumar D."/>
            <person name="Kumar P."/>
            <person name="Balakrishnan L."/>
            <person name="Muthusamy B."/>
            <person name="Yadav A.K."/>
            <person name="Shrivastava P."/>
            <person name="Marimuthu A."/>
            <person name="Anand S."/>
            <person name="Sundaram H."/>
            <person name="Kingsbury R."/>
            <person name="Harsha H.C."/>
            <person name="Nair B."/>
            <person name="Prasad T.S."/>
            <person name="Chauhan D.S."/>
            <person name="Katoch K."/>
            <person name="Katoch V.M."/>
            <person name="Kumar P."/>
            <person name="Chaerkady R."/>
            <person name="Ramachandran S."/>
            <person name="Dash D."/>
            <person name="Pandey A."/>
        </authorList>
    </citation>
    <scope>IDENTIFICATION BY MASS SPECTROMETRY [LARGE SCALE ANALYSIS]</scope>
    <source>
        <strain>ATCC 25618 / H37Rv</strain>
    </source>
</reference>
<organism>
    <name type="scientific">Mycobacterium tuberculosis (strain ATCC 25618 / H37Rv)</name>
    <dbReference type="NCBI Taxonomy" id="83332"/>
    <lineage>
        <taxon>Bacteria</taxon>
        <taxon>Bacillati</taxon>
        <taxon>Actinomycetota</taxon>
        <taxon>Actinomycetes</taxon>
        <taxon>Mycobacteriales</taxon>
        <taxon>Mycobacteriaceae</taxon>
        <taxon>Mycobacterium</taxon>
        <taxon>Mycobacterium tuberculosis complex</taxon>
    </lineage>
</organism>
<keyword id="KW-1185">Reference proteome</keyword>
<keyword id="KW-0687">Ribonucleoprotein</keyword>
<keyword id="KW-0689">Ribosomal protein</keyword>
<keyword id="KW-0694">RNA-binding</keyword>
<keyword id="KW-0699">rRNA-binding</keyword>
<evidence type="ECO:0000250" key="1"/>
<evidence type="ECO:0000305" key="2"/>
<gene>
    <name type="primary">rplJ</name>
    <name type="ordered locus">Rv0651</name>
    <name type="ORF">MTCY20H10.32</name>
</gene>
<accession>P9WHE7</accession>
<accession>L0T634</accession>
<accession>P66044</accession>
<accession>P96940</accession>
<sequence>MARADKATAVADIAAQFKESTATLITEYRGLTVANLAELRRSLTGSATYAVAKNTLIKRAASEAGIEGLDELFVGPTAIAFVTGEPVDAAKAIKTFAKEHKALVIKGGYMDGHPLTVAEVERIADLESREVLLAKLAGAMKGNLAKAAGLFNAPASQLARLAAALQEKKACPGPDSAE</sequence>
<protein>
    <recommendedName>
        <fullName evidence="2">Large ribosomal subunit protein uL10</fullName>
    </recommendedName>
    <alternativeName>
        <fullName>50S ribosomal protein L10</fullName>
    </alternativeName>
</protein>
<comment type="function">
    <text evidence="1">Forms part of the ribosomal stalk, playing a central role in the interaction of the ribosome with GTP-bound translation factors.</text>
</comment>
<comment type="subunit">
    <text evidence="1">Part of the ribosomal stalk of the 50S ribosomal subunit. The N-terminus interacts with L11 and the large rRNA to form the base of the stalk. The C-terminus forms an elongated spine to which L12 dimers bind in a sequential fashion forming a multimeric L10(L12)X complex (By similarity).</text>
</comment>
<comment type="interaction">
    <interactant intactId="EBI-16016356">
        <id>P9WHE7</id>
    </interactant>
    <interactant intactId="EBI-16016380">
        <id>P9WHE3</id>
        <label>rplL</label>
    </interactant>
    <organismsDiffer>false</organismsDiffer>
    <experiments>3</experiments>
</comment>
<comment type="similarity">
    <text evidence="2">Belongs to the universal ribosomal protein uL10 family.</text>
</comment>
<name>RL10_MYCTU</name>
<dbReference type="EMBL" id="AL123456">
    <property type="protein sequence ID" value="CCP43394.1"/>
    <property type="molecule type" value="Genomic_DNA"/>
</dbReference>
<dbReference type="PIR" id="H70614">
    <property type="entry name" value="H70614"/>
</dbReference>
<dbReference type="RefSeq" id="NP_215165.1">
    <property type="nucleotide sequence ID" value="NC_000962.3"/>
</dbReference>
<dbReference type="RefSeq" id="WP_003403341.1">
    <property type="nucleotide sequence ID" value="NZ_NVQJ01000007.1"/>
</dbReference>
<dbReference type="SMR" id="P9WHE7"/>
<dbReference type="BioGRID" id="4357475">
    <property type="interactions" value="1"/>
</dbReference>
<dbReference type="FunCoup" id="P9WHE7">
    <property type="interactions" value="283"/>
</dbReference>
<dbReference type="IntAct" id="P9WHE7">
    <property type="interactions" value="1"/>
</dbReference>
<dbReference type="STRING" id="83332.Rv0651"/>
<dbReference type="PaxDb" id="83332-Rv0651"/>
<dbReference type="DNASU" id="888049"/>
<dbReference type="GeneID" id="45424611"/>
<dbReference type="GeneID" id="888049"/>
<dbReference type="KEGG" id="mtu:Rv0651"/>
<dbReference type="KEGG" id="mtv:RVBD_0651"/>
<dbReference type="TubercuList" id="Rv0651"/>
<dbReference type="eggNOG" id="COG0244">
    <property type="taxonomic scope" value="Bacteria"/>
</dbReference>
<dbReference type="InParanoid" id="P9WHE7"/>
<dbReference type="OrthoDB" id="3186107at2"/>
<dbReference type="PhylomeDB" id="P9WHE7"/>
<dbReference type="PRO" id="PR:P9WHE7"/>
<dbReference type="Proteomes" id="UP000001584">
    <property type="component" value="Chromosome"/>
</dbReference>
<dbReference type="GO" id="GO:0022625">
    <property type="term" value="C:cytosolic large ribosomal subunit"/>
    <property type="evidence" value="ECO:0000318"/>
    <property type="project" value="GO_Central"/>
</dbReference>
<dbReference type="GO" id="GO:0009274">
    <property type="term" value="C:peptidoglycan-based cell wall"/>
    <property type="evidence" value="ECO:0007005"/>
    <property type="project" value="MTBBASE"/>
</dbReference>
<dbReference type="GO" id="GO:0005886">
    <property type="term" value="C:plasma membrane"/>
    <property type="evidence" value="ECO:0007005"/>
    <property type="project" value="MTBBASE"/>
</dbReference>
<dbReference type="GO" id="GO:0070180">
    <property type="term" value="F:large ribosomal subunit rRNA binding"/>
    <property type="evidence" value="ECO:0007669"/>
    <property type="project" value="UniProtKB-UniRule"/>
</dbReference>
<dbReference type="GO" id="GO:0003735">
    <property type="term" value="F:structural constituent of ribosome"/>
    <property type="evidence" value="ECO:0000318"/>
    <property type="project" value="GO_Central"/>
</dbReference>
<dbReference type="GO" id="GO:0006412">
    <property type="term" value="P:translation"/>
    <property type="evidence" value="ECO:0000318"/>
    <property type="project" value="GO_Central"/>
</dbReference>
<dbReference type="CDD" id="cd05797">
    <property type="entry name" value="Ribosomal_L10"/>
    <property type="match status" value="1"/>
</dbReference>
<dbReference type="FunFam" id="3.30.70.1730:FF:000003">
    <property type="entry name" value="50S ribosomal protein L10"/>
    <property type="match status" value="1"/>
</dbReference>
<dbReference type="Gene3D" id="3.30.70.1730">
    <property type="match status" value="1"/>
</dbReference>
<dbReference type="Gene3D" id="6.10.250.290">
    <property type="match status" value="1"/>
</dbReference>
<dbReference type="HAMAP" id="MF_00362">
    <property type="entry name" value="Ribosomal_uL10"/>
    <property type="match status" value="1"/>
</dbReference>
<dbReference type="InterPro" id="IPR001790">
    <property type="entry name" value="Ribosomal_uL10"/>
</dbReference>
<dbReference type="InterPro" id="IPR043141">
    <property type="entry name" value="Ribosomal_uL10-like_sf"/>
</dbReference>
<dbReference type="InterPro" id="IPR022973">
    <property type="entry name" value="Ribosomal_uL10_bac"/>
</dbReference>
<dbReference type="InterPro" id="IPR047865">
    <property type="entry name" value="Ribosomal_uL10_bac_type"/>
</dbReference>
<dbReference type="InterPro" id="IPR002363">
    <property type="entry name" value="Ribosomal_uL10_CS_bac"/>
</dbReference>
<dbReference type="NCBIfam" id="NF000955">
    <property type="entry name" value="PRK00099.1-1"/>
    <property type="match status" value="1"/>
</dbReference>
<dbReference type="PANTHER" id="PTHR11560">
    <property type="entry name" value="39S RIBOSOMAL PROTEIN L10, MITOCHONDRIAL"/>
    <property type="match status" value="1"/>
</dbReference>
<dbReference type="Pfam" id="PF00466">
    <property type="entry name" value="Ribosomal_L10"/>
    <property type="match status" value="1"/>
</dbReference>
<dbReference type="SUPFAM" id="SSF160369">
    <property type="entry name" value="Ribosomal protein L10-like"/>
    <property type="match status" value="1"/>
</dbReference>
<dbReference type="PROSITE" id="PS01109">
    <property type="entry name" value="RIBOSOMAL_L10"/>
    <property type="match status" value="1"/>
</dbReference>
<feature type="chain" id="PRO_0000154674" description="Large ribosomal subunit protein uL10">
    <location>
        <begin position="1"/>
        <end position="178"/>
    </location>
</feature>
<proteinExistence type="evidence at protein level"/>